<keyword id="KW-0028">Amino-acid biosynthesis</keyword>
<keyword id="KW-0055">Arginine biosynthesis</keyword>
<keyword id="KW-0963">Cytoplasm</keyword>
<keyword id="KW-0521">NADP</keyword>
<keyword id="KW-0560">Oxidoreductase</keyword>
<keyword id="KW-1185">Reference proteome</keyword>
<organism>
    <name type="scientific">Shewanella loihica (strain ATCC BAA-1088 / PV-4)</name>
    <dbReference type="NCBI Taxonomy" id="323850"/>
    <lineage>
        <taxon>Bacteria</taxon>
        <taxon>Pseudomonadati</taxon>
        <taxon>Pseudomonadota</taxon>
        <taxon>Gammaproteobacteria</taxon>
        <taxon>Alteromonadales</taxon>
        <taxon>Shewanellaceae</taxon>
        <taxon>Shewanella</taxon>
    </lineage>
</organism>
<comment type="function">
    <text evidence="1">Catalyzes the NADPH-dependent reduction of N-acetyl-5-glutamyl phosphate to yield N-acetyl-L-glutamate 5-semialdehyde.</text>
</comment>
<comment type="catalytic activity">
    <reaction evidence="1">
        <text>N-acetyl-L-glutamate 5-semialdehyde + phosphate + NADP(+) = N-acetyl-L-glutamyl 5-phosphate + NADPH + H(+)</text>
        <dbReference type="Rhea" id="RHEA:21588"/>
        <dbReference type="ChEBI" id="CHEBI:15378"/>
        <dbReference type="ChEBI" id="CHEBI:29123"/>
        <dbReference type="ChEBI" id="CHEBI:43474"/>
        <dbReference type="ChEBI" id="CHEBI:57783"/>
        <dbReference type="ChEBI" id="CHEBI:57936"/>
        <dbReference type="ChEBI" id="CHEBI:58349"/>
        <dbReference type="EC" id="1.2.1.38"/>
    </reaction>
</comment>
<comment type="pathway">
    <text evidence="1">Amino-acid biosynthesis; L-arginine biosynthesis; N(2)-acetyl-L-ornithine from L-glutamate: step 3/4.</text>
</comment>
<comment type="subcellular location">
    <subcellularLocation>
        <location evidence="1">Cytoplasm</location>
    </subcellularLocation>
</comment>
<comment type="similarity">
    <text evidence="1">Belongs to the NAGSA dehydrogenase family. Type 1 subfamily.</text>
</comment>
<proteinExistence type="inferred from homology"/>
<name>ARGC_SHELP</name>
<gene>
    <name evidence="1" type="primary">argC</name>
    <name type="ordered locus">Shew_0202</name>
</gene>
<sequence length="326" mass="35327">MKSIAIIGASGYTGAQVTSLIQADDQLKIQGLYVSENSLDKGKTLASLYPVYSHIDLSLAPLTEQAKQAIVNEADAVVLATDHGVSLHLAAWFYQAGLAVFDLSGAYRFADSEQYPKWYGFEHIYPEVLAEAVYGLAEWNTEAIAASKMIAVPGCYPTASLTALKPLKDLMTDSLPVINAVSGVTGAGRKAQLHTSFCEVSLTPYGVLGHRHQPEIATQLGQQVIFTPHLGNFKRGILATITVQMKPGVSEADIAKAYEVYESAPLVNVYHNQFPKVDDVVHTPNCLLGWKYDPLNGYLVVASAIDNLMKGAASQAHQCIKIHFNY</sequence>
<protein>
    <recommendedName>
        <fullName evidence="1">N-acetyl-gamma-glutamyl-phosphate reductase</fullName>
        <shortName evidence="1">AGPR</shortName>
        <ecNumber evidence="1">1.2.1.38</ecNumber>
    </recommendedName>
    <alternativeName>
        <fullName evidence="1">N-acetyl-glutamate semialdehyde dehydrogenase</fullName>
        <shortName evidence="1">NAGSA dehydrogenase</shortName>
    </alternativeName>
</protein>
<accession>A3Q9C6</accession>
<dbReference type="EC" id="1.2.1.38" evidence="1"/>
<dbReference type="EMBL" id="CP000606">
    <property type="protein sequence ID" value="ABO22074.1"/>
    <property type="molecule type" value="Genomic_DNA"/>
</dbReference>
<dbReference type="RefSeq" id="WP_011864009.1">
    <property type="nucleotide sequence ID" value="NC_009092.1"/>
</dbReference>
<dbReference type="SMR" id="A3Q9C6"/>
<dbReference type="STRING" id="323850.Shew_0202"/>
<dbReference type="KEGG" id="slo:Shew_0202"/>
<dbReference type="eggNOG" id="COG0002">
    <property type="taxonomic scope" value="Bacteria"/>
</dbReference>
<dbReference type="HOGENOM" id="CLU_006384_0_1_6"/>
<dbReference type="OrthoDB" id="9801289at2"/>
<dbReference type="UniPathway" id="UPA00068">
    <property type="reaction ID" value="UER00108"/>
</dbReference>
<dbReference type="Proteomes" id="UP000001558">
    <property type="component" value="Chromosome"/>
</dbReference>
<dbReference type="GO" id="GO:0005737">
    <property type="term" value="C:cytoplasm"/>
    <property type="evidence" value="ECO:0007669"/>
    <property type="project" value="UniProtKB-SubCell"/>
</dbReference>
<dbReference type="GO" id="GO:0003942">
    <property type="term" value="F:N-acetyl-gamma-glutamyl-phosphate reductase activity"/>
    <property type="evidence" value="ECO:0007669"/>
    <property type="project" value="UniProtKB-UniRule"/>
</dbReference>
<dbReference type="GO" id="GO:0051287">
    <property type="term" value="F:NAD binding"/>
    <property type="evidence" value="ECO:0007669"/>
    <property type="project" value="InterPro"/>
</dbReference>
<dbReference type="GO" id="GO:0070401">
    <property type="term" value="F:NADP+ binding"/>
    <property type="evidence" value="ECO:0007669"/>
    <property type="project" value="InterPro"/>
</dbReference>
<dbReference type="GO" id="GO:0006526">
    <property type="term" value="P:L-arginine biosynthetic process"/>
    <property type="evidence" value="ECO:0007669"/>
    <property type="project" value="UniProtKB-UniRule"/>
</dbReference>
<dbReference type="CDD" id="cd23934">
    <property type="entry name" value="AGPR_1_C"/>
    <property type="match status" value="1"/>
</dbReference>
<dbReference type="CDD" id="cd17895">
    <property type="entry name" value="AGPR_1_N"/>
    <property type="match status" value="1"/>
</dbReference>
<dbReference type="FunFam" id="3.30.360.10:FF:000014">
    <property type="entry name" value="N-acetyl-gamma-glutamyl-phosphate reductase"/>
    <property type="match status" value="1"/>
</dbReference>
<dbReference type="Gene3D" id="3.30.360.10">
    <property type="entry name" value="Dihydrodipicolinate Reductase, domain 2"/>
    <property type="match status" value="1"/>
</dbReference>
<dbReference type="Gene3D" id="3.40.50.720">
    <property type="entry name" value="NAD(P)-binding Rossmann-like Domain"/>
    <property type="match status" value="1"/>
</dbReference>
<dbReference type="HAMAP" id="MF_00150">
    <property type="entry name" value="ArgC_type1"/>
    <property type="match status" value="1"/>
</dbReference>
<dbReference type="InterPro" id="IPR023013">
    <property type="entry name" value="AGPR_AS"/>
</dbReference>
<dbReference type="InterPro" id="IPR000706">
    <property type="entry name" value="AGPR_type-1"/>
</dbReference>
<dbReference type="InterPro" id="IPR036291">
    <property type="entry name" value="NAD(P)-bd_dom_sf"/>
</dbReference>
<dbReference type="InterPro" id="IPR050085">
    <property type="entry name" value="NAGSA_dehydrogenase"/>
</dbReference>
<dbReference type="InterPro" id="IPR000534">
    <property type="entry name" value="Semialdehyde_DH_NAD-bd"/>
</dbReference>
<dbReference type="NCBIfam" id="TIGR01850">
    <property type="entry name" value="argC"/>
    <property type="match status" value="1"/>
</dbReference>
<dbReference type="PANTHER" id="PTHR32338:SF10">
    <property type="entry name" value="N-ACETYL-GAMMA-GLUTAMYL-PHOSPHATE REDUCTASE, CHLOROPLASTIC-RELATED"/>
    <property type="match status" value="1"/>
</dbReference>
<dbReference type="PANTHER" id="PTHR32338">
    <property type="entry name" value="N-ACETYL-GAMMA-GLUTAMYL-PHOSPHATE REDUCTASE, CHLOROPLASTIC-RELATED-RELATED"/>
    <property type="match status" value="1"/>
</dbReference>
<dbReference type="Pfam" id="PF01118">
    <property type="entry name" value="Semialdhyde_dh"/>
    <property type="match status" value="1"/>
</dbReference>
<dbReference type="Pfam" id="PF22698">
    <property type="entry name" value="Semialdhyde_dhC_1"/>
    <property type="match status" value="1"/>
</dbReference>
<dbReference type="SMART" id="SM00859">
    <property type="entry name" value="Semialdhyde_dh"/>
    <property type="match status" value="1"/>
</dbReference>
<dbReference type="SUPFAM" id="SSF55347">
    <property type="entry name" value="Glyceraldehyde-3-phosphate dehydrogenase-like, C-terminal domain"/>
    <property type="match status" value="1"/>
</dbReference>
<dbReference type="SUPFAM" id="SSF51735">
    <property type="entry name" value="NAD(P)-binding Rossmann-fold domains"/>
    <property type="match status" value="1"/>
</dbReference>
<dbReference type="PROSITE" id="PS01224">
    <property type="entry name" value="ARGC"/>
    <property type="match status" value="1"/>
</dbReference>
<reference key="1">
    <citation type="submission" date="2007-03" db="EMBL/GenBank/DDBJ databases">
        <title>Complete sequence of Shewanella loihica PV-4.</title>
        <authorList>
            <consortium name="US DOE Joint Genome Institute"/>
            <person name="Copeland A."/>
            <person name="Lucas S."/>
            <person name="Lapidus A."/>
            <person name="Barry K."/>
            <person name="Detter J.C."/>
            <person name="Glavina del Rio T."/>
            <person name="Hammon N."/>
            <person name="Israni S."/>
            <person name="Dalin E."/>
            <person name="Tice H."/>
            <person name="Pitluck S."/>
            <person name="Chain P."/>
            <person name="Malfatti S."/>
            <person name="Shin M."/>
            <person name="Vergez L."/>
            <person name="Schmutz J."/>
            <person name="Larimer F."/>
            <person name="Land M."/>
            <person name="Hauser L."/>
            <person name="Kyrpides N."/>
            <person name="Mikhailova N."/>
            <person name="Romine M.F."/>
            <person name="Serres G."/>
            <person name="Fredrickson J."/>
            <person name="Tiedje J."/>
            <person name="Richardson P."/>
        </authorList>
    </citation>
    <scope>NUCLEOTIDE SEQUENCE [LARGE SCALE GENOMIC DNA]</scope>
    <source>
        <strain>ATCC BAA-1088 / PV-4</strain>
    </source>
</reference>
<feature type="chain" id="PRO_1000011060" description="N-acetyl-gamma-glutamyl-phosphate reductase">
    <location>
        <begin position="1"/>
        <end position="326"/>
    </location>
</feature>
<feature type="active site" evidence="1">
    <location>
        <position position="155"/>
    </location>
</feature>
<evidence type="ECO:0000255" key="1">
    <source>
        <dbReference type="HAMAP-Rule" id="MF_00150"/>
    </source>
</evidence>